<name>Y026_SIFVH</name>
<keyword id="KW-1185">Reference proteome</keyword>
<organism>
    <name type="scientific">Sulfolobus islandicus filamentous virus (isolate Iceland/Hveragerdi)</name>
    <name type="common">SIFV</name>
    <dbReference type="NCBI Taxonomy" id="654908"/>
    <lineage>
        <taxon>Viruses</taxon>
        <taxon>Adnaviria</taxon>
        <taxon>Zilligvirae</taxon>
        <taxon>Taleaviricota</taxon>
        <taxon>Tokiviricetes</taxon>
        <taxon>Ligamenvirales</taxon>
        <taxon>Lipothrixviridae</taxon>
        <taxon>Betalipothrixvirus</taxon>
        <taxon>Sulfolobus islandicus filamentous virus</taxon>
    </lineage>
</organism>
<proteinExistence type="predicted"/>
<gene>
    <name type="primary">SIFV0026</name>
</gene>
<feature type="chain" id="PRO_0000385383" description="Uncharacterized protein 26">
    <location>
        <begin position="1"/>
        <end position="118"/>
    </location>
</feature>
<dbReference type="EMBL" id="AF440571">
    <property type="protein sequence ID" value="AAL27737.1"/>
    <property type="molecule type" value="Genomic_DNA"/>
</dbReference>
<dbReference type="RefSeq" id="NP_445691.1">
    <property type="nucleotide sequence ID" value="NC_003214.2"/>
</dbReference>
<dbReference type="SMR" id="Q914K4"/>
<dbReference type="GeneID" id="922300"/>
<dbReference type="KEGG" id="vg:922300"/>
<dbReference type="Proteomes" id="UP000007017">
    <property type="component" value="Segment"/>
</dbReference>
<dbReference type="Gene3D" id="3.40.50.11170">
    <property type="entry name" value="Uncharacterised protein PF08960, DUF1874"/>
    <property type="match status" value="1"/>
</dbReference>
<dbReference type="InterPro" id="IPR015055">
    <property type="entry name" value="STIV_B116-like"/>
</dbReference>
<dbReference type="InterPro" id="IPR037236">
    <property type="entry name" value="STIV_B116-like_sf"/>
</dbReference>
<dbReference type="Pfam" id="PF08960">
    <property type="entry name" value="STIV_B116-like"/>
    <property type="match status" value="1"/>
</dbReference>
<dbReference type="SUPFAM" id="SSF143602">
    <property type="entry name" value="STIV B116-like"/>
    <property type="match status" value="1"/>
</dbReference>
<accession>Q914K4</accession>
<reference key="1">
    <citation type="journal article" date="2000" name="Virology">
        <title>A novel lipothrixvirus, SIFV, of the extremely thermophilic crenarchaeon Sulfolobus.</title>
        <authorList>
            <person name="Arnold H.P."/>
            <person name="Zillig W."/>
            <person name="Ziese U."/>
            <person name="Holz I."/>
            <person name="Crosby M."/>
            <person name="Utterback T."/>
            <person name="Weidmann J.F."/>
            <person name="Umayam L.A."/>
            <person name="Teffera K."/>
            <person name="Kristjanson J.K."/>
            <person name="Klenk H.P."/>
            <person name="Nelson K.E."/>
            <person name="Fraser C.M."/>
        </authorList>
    </citation>
    <scope>NUCLEOTIDE SEQUENCE [GENOMIC DNA]</scope>
</reference>
<sequence>MLYILNSATLPLKPGKEYVIHAKELTIEEAKELLENERFISAVGHEATAKMLTNIFDVEIPMNRIQIFLDDGDKLLSIILKTRLEEGKVIKTVEELEQIGYNIWLFEVVTYEHNVKYE</sequence>
<organismHost>
    <name type="scientific">Saccharolobus islandicus</name>
    <name type="common">Sulfolobus islandicus</name>
    <dbReference type="NCBI Taxonomy" id="43080"/>
</organismHost>
<protein>
    <recommendedName>
        <fullName>Uncharacterized protein 26</fullName>
    </recommendedName>
</protein>